<gene>
    <name evidence="1" type="primary">rpoA</name>
    <name type="ordered locus">DSY0499</name>
</gene>
<dbReference type="EC" id="2.7.7.6" evidence="1"/>
<dbReference type="EMBL" id="AP008230">
    <property type="protein sequence ID" value="BAE82288.1"/>
    <property type="molecule type" value="Genomic_DNA"/>
</dbReference>
<dbReference type="RefSeq" id="WP_005810110.1">
    <property type="nucleotide sequence ID" value="NC_007907.1"/>
</dbReference>
<dbReference type="SMR" id="Q250K4"/>
<dbReference type="STRING" id="138119.DSY0499"/>
<dbReference type="KEGG" id="dsy:DSY0499"/>
<dbReference type="eggNOG" id="COG0202">
    <property type="taxonomic scope" value="Bacteria"/>
</dbReference>
<dbReference type="HOGENOM" id="CLU_053084_0_1_9"/>
<dbReference type="Proteomes" id="UP000001946">
    <property type="component" value="Chromosome"/>
</dbReference>
<dbReference type="GO" id="GO:0005737">
    <property type="term" value="C:cytoplasm"/>
    <property type="evidence" value="ECO:0007669"/>
    <property type="project" value="UniProtKB-ARBA"/>
</dbReference>
<dbReference type="GO" id="GO:0000428">
    <property type="term" value="C:DNA-directed RNA polymerase complex"/>
    <property type="evidence" value="ECO:0007669"/>
    <property type="project" value="UniProtKB-KW"/>
</dbReference>
<dbReference type="GO" id="GO:0003677">
    <property type="term" value="F:DNA binding"/>
    <property type="evidence" value="ECO:0007669"/>
    <property type="project" value="UniProtKB-UniRule"/>
</dbReference>
<dbReference type="GO" id="GO:0003899">
    <property type="term" value="F:DNA-directed RNA polymerase activity"/>
    <property type="evidence" value="ECO:0007669"/>
    <property type="project" value="UniProtKB-UniRule"/>
</dbReference>
<dbReference type="GO" id="GO:0046983">
    <property type="term" value="F:protein dimerization activity"/>
    <property type="evidence" value="ECO:0007669"/>
    <property type="project" value="InterPro"/>
</dbReference>
<dbReference type="GO" id="GO:0006351">
    <property type="term" value="P:DNA-templated transcription"/>
    <property type="evidence" value="ECO:0007669"/>
    <property type="project" value="UniProtKB-UniRule"/>
</dbReference>
<dbReference type="CDD" id="cd06928">
    <property type="entry name" value="RNAP_alpha_NTD"/>
    <property type="match status" value="1"/>
</dbReference>
<dbReference type="FunFam" id="1.10.150.20:FF:000001">
    <property type="entry name" value="DNA-directed RNA polymerase subunit alpha"/>
    <property type="match status" value="1"/>
</dbReference>
<dbReference type="FunFam" id="2.170.120.12:FF:000001">
    <property type="entry name" value="DNA-directed RNA polymerase subunit alpha"/>
    <property type="match status" value="1"/>
</dbReference>
<dbReference type="Gene3D" id="1.10.150.20">
    <property type="entry name" value="5' to 3' exonuclease, C-terminal subdomain"/>
    <property type="match status" value="1"/>
</dbReference>
<dbReference type="Gene3D" id="2.170.120.12">
    <property type="entry name" value="DNA-directed RNA polymerase, insert domain"/>
    <property type="match status" value="1"/>
</dbReference>
<dbReference type="Gene3D" id="3.30.1360.10">
    <property type="entry name" value="RNA polymerase, RBP11-like subunit"/>
    <property type="match status" value="1"/>
</dbReference>
<dbReference type="HAMAP" id="MF_00059">
    <property type="entry name" value="RNApol_bact_RpoA"/>
    <property type="match status" value="1"/>
</dbReference>
<dbReference type="InterPro" id="IPR011262">
    <property type="entry name" value="DNA-dir_RNA_pol_insert"/>
</dbReference>
<dbReference type="InterPro" id="IPR011263">
    <property type="entry name" value="DNA-dir_RNA_pol_RpoA/D/Rpb3"/>
</dbReference>
<dbReference type="InterPro" id="IPR011773">
    <property type="entry name" value="DNA-dir_RpoA"/>
</dbReference>
<dbReference type="InterPro" id="IPR036603">
    <property type="entry name" value="RBP11-like"/>
</dbReference>
<dbReference type="InterPro" id="IPR011260">
    <property type="entry name" value="RNAP_asu_C"/>
</dbReference>
<dbReference type="InterPro" id="IPR036643">
    <property type="entry name" value="RNApol_insert_sf"/>
</dbReference>
<dbReference type="NCBIfam" id="NF003513">
    <property type="entry name" value="PRK05182.1-2"/>
    <property type="match status" value="1"/>
</dbReference>
<dbReference type="NCBIfam" id="NF003515">
    <property type="entry name" value="PRK05182.2-1"/>
    <property type="match status" value="1"/>
</dbReference>
<dbReference type="NCBIfam" id="NF003516">
    <property type="entry name" value="PRK05182.2-2"/>
    <property type="match status" value="1"/>
</dbReference>
<dbReference type="NCBIfam" id="NF003519">
    <property type="entry name" value="PRK05182.2-5"/>
    <property type="match status" value="1"/>
</dbReference>
<dbReference type="NCBIfam" id="TIGR02027">
    <property type="entry name" value="rpoA"/>
    <property type="match status" value="1"/>
</dbReference>
<dbReference type="Pfam" id="PF01000">
    <property type="entry name" value="RNA_pol_A_bac"/>
    <property type="match status" value="1"/>
</dbReference>
<dbReference type="Pfam" id="PF03118">
    <property type="entry name" value="RNA_pol_A_CTD"/>
    <property type="match status" value="1"/>
</dbReference>
<dbReference type="Pfam" id="PF01193">
    <property type="entry name" value="RNA_pol_L"/>
    <property type="match status" value="1"/>
</dbReference>
<dbReference type="SMART" id="SM00662">
    <property type="entry name" value="RPOLD"/>
    <property type="match status" value="1"/>
</dbReference>
<dbReference type="SUPFAM" id="SSF47789">
    <property type="entry name" value="C-terminal domain of RNA polymerase alpha subunit"/>
    <property type="match status" value="1"/>
</dbReference>
<dbReference type="SUPFAM" id="SSF56553">
    <property type="entry name" value="Insert subdomain of RNA polymerase alpha subunit"/>
    <property type="match status" value="1"/>
</dbReference>
<dbReference type="SUPFAM" id="SSF55257">
    <property type="entry name" value="RBP11-like subunits of RNA polymerase"/>
    <property type="match status" value="1"/>
</dbReference>
<proteinExistence type="inferred from homology"/>
<evidence type="ECO:0000255" key="1">
    <source>
        <dbReference type="HAMAP-Rule" id="MF_00059"/>
    </source>
</evidence>
<comment type="function">
    <text evidence="1">DNA-dependent RNA polymerase catalyzes the transcription of DNA into RNA using the four ribonucleoside triphosphates as substrates.</text>
</comment>
<comment type="catalytic activity">
    <reaction evidence="1">
        <text>RNA(n) + a ribonucleoside 5'-triphosphate = RNA(n+1) + diphosphate</text>
        <dbReference type="Rhea" id="RHEA:21248"/>
        <dbReference type="Rhea" id="RHEA-COMP:14527"/>
        <dbReference type="Rhea" id="RHEA-COMP:17342"/>
        <dbReference type="ChEBI" id="CHEBI:33019"/>
        <dbReference type="ChEBI" id="CHEBI:61557"/>
        <dbReference type="ChEBI" id="CHEBI:140395"/>
        <dbReference type="EC" id="2.7.7.6"/>
    </reaction>
</comment>
<comment type="subunit">
    <text evidence="1">Homodimer. The RNAP catalytic core consists of 2 alpha, 1 beta, 1 beta' and 1 omega subunit. When a sigma factor is associated with the core the holoenzyme is formed, which can initiate transcription.</text>
</comment>
<comment type="domain">
    <text evidence="1">The N-terminal domain is essential for RNAP assembly and basal transcription, whereas the C-terminal domain is involved in interaction with transcriptional regulators and with upstream promoter elements.</text>
</comment>
<comment type="similarity">
    <text evidence="1">Belongs to the RNA polymerase alpha chain family.</text>
</comment>
<name>RPOA_DESHY</name>
<reference key="1">
    <citation type="journal article" date="2006" name="J. Bacteriol.">
        <title>Complete genome sequence of the dehalorespiring bacterium Desulfitobacterium hafniense Y51 and comparison with Dehalococcoides ethenogenes 195.</title>
        <authorList>
            <person name="Nonaka H."/>
            <person name="Keresztes G."/>
            <person name="Shinoda Y."/>
            <person name="Ikenaga Y."/>
            <person name="Abe M."/>
            <person name="Naito K."/>
            <person name="Inatomi K."/>
            <person name="Furukawa K."/>
            <person name="Inui M."/>
            <person name="Yukawa H."/>
        </authorList>
    </citation>
    <scope>NUCLEOTIDE SEQUENCE [LARGE SCALE GENOMIC DNA]</scope>
    <source>
        <strain>Y51</strain>
    </source>
</reference>
<sequence>MLEIEKPKIECVERTDDNSYAKFVVEPLERGYGITLGNSLRRILLSSLPGTAVTSVKIEGVLHEFSTVPGVLEDVTDIILNLKSLALKGHTDEPKVLRLEAEGEGVIKAGDIITDADIEILNPDLKIATLDKDGRLFMEMTAERGRGYVSADKNKKPDQAIGIIPIDSIFAPIYKVNYTVEDTRVGMVTDYDKLTLEVWSNGSITPEEATSLAAKILSEHLRLFIGLTDKLNNVEIMVEKEEEAKDKILEMTIEDLDLSVRSYNCLKRAGINSVEELTQKTEEDMIKVRNLGRKSLEEVESKLKELGLGFRKADD</sequence>
<keyword id="KW-0240">DNA-directed RNA polymerase</keyword>
<keyword id="KW-0548">Nucleotidyltransferase</keyword>
<keyword id="KW-1185">Reference proteome</keyword>
<keyword id="KW-0804">Transcription</keyword>
<keyword id="KW-0808">Transferase</keyword>
<protein>
    <recommendedName>
        <fullName evidence="1">DNA-directed RNA polymerase subunit alpha</fullName>
        <shortName evidence="1">RNAP subunit alpha</shortName>
        <ecNumber evidence="1">2.7.7.6</ecNumber>
    </recommendedName>
    <alternativeName>
        <fullName evidence="1">RNA polymerase subunit alpha</fullName>
    </alternativeName>
    <alternativeName>
        <fullName evidence="1">Transcriptase subunit alpha</fullName>
    </alternativeName>
</protein>
<accession>Q250K4</accession>
<organism>
    <name type="scientific">Desulfitobacterium hafniense (strain Y51)</name>
    <dbReference type="NCBI Taxonomy" id="138119"/>
    <lineage>
        <taxon>Bacteria</taxon>
        <taxon>Bacillati</taxon>
        <taxon>Bacillota</taxon>
        <taxon>Clostridia</taxon>
        <taxon>Eubacteriales</taxon>
        <taxon>Desulfitobacteriaceae</taxon>
        <taxon>Desulfitobacterium</taxon>
    </lineage>
</organism>
<feature type="chain" id="PRO_0000264497" description="DNA-directed RNA polymerase subunit alpha">
    <location>
        <begin position="1"/>
        <end position="315"/>
    </location>
</feature>
<feature type="region of interest" description="Alpha N-terminal domain (alpha-NTD)" evidence="1">
    <location>
        <begin position="1"/>
        <end position="228"/>
    </location>
</feature>
<feature type="region of interest" description="Alpha C-terminal domain (alpha-CTD)" evidence="1">
    <location>
        <begin position="245"/>
        <end position="315"/>
    </location>
</feature>